<accession>Q37625</accession>
<reference key="1">
    <citation type="journal article" date="1994" name="J. Mol. Biol.">
        <title>Complete sequence of the mitochondrial DNA of the chlorophyte alga Prototheca wickerhamii. Gene content and genome organization.</title>
        <authorList>
            <person name="Wolff G."/>
            <person name="Plante I."/>
            <person name="Lang B.F."/>
            <person name="Kueck U."/>
            <person name="Burger G."/>
        </authorList>
    </citation>
    <scope>NUCLEOTIDE SEQUENCE [GENOMIC DNA]</scope>
    <source>
        <strain>263-11</strain>
    </source>
</reference>
<sequence>MYEFLGILIYFFIALALSLLLLGLPFLVSTRKADPEKISAYECGFDPFDDARGRFDIQFYLVAILFIIFDLEVAFLFPWALTLNKIGYFGFWSMMLFLFILTVGFIYEWRKGALDWS</sequence>
<gene>
    <name type="primary">NAD3</name>
</gene>
<dbReference type="EC" id="7.1.1.2"/>
<dbReference type="EMBL" id="U02970">
    <property type="protein sequence ID" value="AAD12652.1"/>
    <property type="molecule type" value="Genomic_DNA"/>
</dbReference>
<dbReference type="PIR" id="T11933">
    <property type="entry name" value="T11933"/>
</dbReference>
<dbReference type="RefSeq" id="NP_042264.1">
    <property type="nucleotide sequence ID" value="NC_001613.1"/>
</dbReference>
<dbReference type="SMR" id="Q37625"/>
<dbReference type="GeneID" id="802113"/>
<dbReference type="GO" id="GO:0031966">
    <property type="term" value="C:mitochondrial membrane"/>
    <property type="evidence" value="ECO:0007669"/>
    <property type="project" value="UniProtKB-SubCell"/>
</dbReference>
<dbReference type="GO" id="GO:0030964">
    <property type="term" value="C:NADH dehydrogenase complex"/>
    <property type="evidence" value="ECO:0007669"/>
    <property type="project" value="TreeGrafter"/>
</dbReference>
<dbReference type="GO" id="GO:0008137">
    <property type="term" value="F:NADH dehydrogenase (ubiquinone) activity"/>
    <property type="evidence" value="ECO:0007669"/>
    <property type="project" value="UniProtKB-EC"/>
</dbReference>
<dbReference type="FunFam" id="1.20.58.1610:FF:000004">
    <property type="entry name" value="NADH-quinone oxidoreductase subunit A"/>
    <property type="match status" value="1"/>
</dbReference>
<dbReference type="Gene3D" id="1.20.58.1610">
    <property type="entry name" value="NADH:ubiquinone/plastoquinone oxidoreductase, chain 3"/>
    <property type="match status" value="1"/>
</dbReference>
<dbReference type="HAMAP" id="MF_01394">
    <property type="entry name" value="NDH1_NuoA"/>
    <property type="match status" value="1"/>
</dbReference>
<dbReference type="InterPro" id="IPR023043">
    <property type="entry name" value="NAD(P)H_OxRDtase_bac/plastid"/>
</dbReference>
<dbReference type="InterPro" id="IPR000440">
    <property type="entry name" value="NADH_UbQ/plastoQ_OxRdtase_su3"/>
</dbReference>
<dbReference type="InterPro" id="IPR038430">
    <property type="entry name" value="NDAH_ubi_oxred_su3_sf"/>
</dbReference>
<dbReference type="PANTHER" id="PTHR11058">
    <property type="entry name" value="NADH-UBIQUINONE OXIDOREDUCTASE CHAIN 3"/>
    <property type="match status" value="1"/>
</dbReference>
<dbReference type="PANTHER" id="PTHR11058:SF9">
    <property type="entry name" value="NADH-UBIQUINONE OXIDOREDUCTASE CHAIN 3"/>
    <property type="match status" value="1"/>
</dbReference>
<dbReference type="Pfam" id="PF00507">
    <property type="entry name" value="Oxidored_q4"/>
    <property type="match status" value="1"/>
</dbReference>
<evidence type="ECO:0000250" key="1"/>
<evidence type="ECO:0000255" key="2"/>
<evidence type="ECO:0000305" key="3"/>
<name>NU3M_PROWI</name>
<keyword id="KW-0249">Electron transport</keyword>
<keyword id="KW-0472">Membrane</keyword>
<keyword id="KW-0496">Mitochondrion</keyword>
<keyword id="KW-0520">NAD</keyword>
<keyword id="KW-0679">Respiratory chain</keyword>
<keyword id="KW-1278">Translocase</keyword>
<keyword id="KW-0812">Transmembrane</keyword>
<keyword id="KW-1133">Transmembrane helix</keyword>
<keyword id="KW-0813">Transport</keyword>
<keyword id="KW-0830">Ubiquinone</keyword>
<feature type="chain" id="PRO_0000117815" description="NADH-ubiquinone oxidoreductase chain 3">
    <location>
        <begin position="1"/>
        <end position="117"/>
    </location>
</feature>
<feature type="transmembrane region" description="Helical" evidence="2">
    <location>
        <begin position="4"/>
        <end position="24"/>
    </location>
</feature>
<feature type="transmembrane region" description="Helical" evidence="2">
    <location>
        <begin position="61"/>
        <end position="81"/>
    </location>
</feature>
<feature type="transmembrane region" description="Helical" evidence="2">
    <location>
        <begin position="86"/>
        <end position="106"/>
    </location>
</feature>
<comment type="function">
    <text evidence="1">Core subunit of the mitochondrial membrane respiratory chain NADH dehydrogenase (Complex I) that is believed to belong to the minimal assembly required for catalysis. Complex I functions in the transfer of electrons from NADH to the respiratory chain. The immediate electron acceptor for the enzyme is believed to be ubiquinone (By similarity).</text>
</comment>
<comment type="catalytic activity">
    <reaction>
        <text>a ubiquinone + NADH + 5 H(+)(in) = a ubiquinol + NAD(+) + 4 H(+)(out)</text>
        <dbReference type="Rhea" id="RHEA:29091"/>
        <dbReference type="Rhea" id="RHEA-COMP:9565"/>
        <dbReference type="Rhea" id="RHEA-COMP:9566"/>
        <dbReference type="ChEBI" id="CHEBI:15378"/>
        <dbReference type="ChEBI" id="CHEBI:16389"/>
        <dbReference type="ChEBI" id="CHEBI:17976"/>
        <dbReference type="ChEBI" id="CHEBI:57540"/>
        <dbReference type="ChEBI" id="CHEBI:57945"/>
        <dbReference type="EC" id="7.1.1.2"/>
    </reaction>
</comment>
<comment type="subcellular location">
    <subcellularLocation>
        <location evidence="1">Mitochondrion membrane</location>
        <topology evidence="1">Multi-pass membrane protein</topology>
    </subcellularLocation>
</comment>
<comment type="similarity">
    <text evidence="3">Belongs to the complex I subunit 3 family.</text>
</comment>
<geneLocation type="mitochondrion"/>
<organism>
    <name type="scientific">Prototheca wickerhamii</name>
    <dbReference type="NCBI Taxonomy" id="3111"/>
    <lineage>
        <taxon>Eukaryota</taxon>
        <taxon>Viridiplantae</taxon>
        <taxon>Chlorophyta</taxon>
        <taxon>core chlorophytes</taxon>
        <taxon>Trebouxiophyceae</taxon>
        <taxon>Chlorellales</taxon>
        <taxon>Chlorellaceae</taxon>
        <taxon>Prototheca</taxon>
    </lineage>
</organism>
<protein>
    <recommendedName>
        <fullName>NADH-ubiquinone oxidoreductase chain 3</fullName>
        <ecNumber>7.1.1.2</ecNumber>
    </recommendedName>
    <alternativeName>
        <fullName>NADH dehydrogenase subunit 3</fullName>
    </alternativeName>
</protein>
<proteinExistence type="inferred from homology"/>